<organism>
    <name type="scientific">Arabidopsis thaliana</name>
    <name type="common">Mouse-ear cress</name>
    <dbReference type="NCBI Taxonomy" id="3702"/>
    <lineage>
        <taxon>Eukaryota</taxon>
        <taxon>Viridiplantae</taxon>
        <taxon>Streptophyta</taxon>
        <taxon>Embryophyta</taxon>
        <taxon>Tracheophyta</taxon>
        <taxon>Spermatophyta</taxon>
        <taxon>Magnoliopsida</taxon>
        <taxon>eudicotyledons</taxon>
        <taxon>Gunneridae</taxon>
        <taxon>Pentapetalae</taxon>
        <taxon>rosids</taxon>
        <taxon>malvids</taxon>
        <taxon>Brassicales</taxon>
        <taxon>Brassicaceae</taxon>
        <taxon>Camelineae</taxon>
        <taxon>Arabidopsis</taxon>
    </lineage>
</organism>
<keyword id="KW-0007">Acetylation</keyword>
<keyword id="KW-0067">ATP-binding</keyword>
<keyword id="KW-0963">Cytoplasm</keyword>
<keyword id="KW-0436">Ligase</keyword>
<keyword id="KW-0535">Nitrogen fixation</keyword>
<keyword id="KW-0547">Nucleotide-binding</keyword>
<keyword id="KW-0597">Phosphoprotein</keyword>
<keyword id="KW-1185">Reference proteome</keyword>
<sequence length="356" mass="38987">MSSLADLINLDLSDSTDQIIAEYIWIGGSGLDMRSKARTLPGPVTDPSQLPKWNYDGSSTGQAPGDDSEVIIYPQAIFKDPFRRGNNILVMCDAYTPAGEPIPTNKRHAAAKIFEDPSVVAEETWYGIEQEYTLLQKDIKWPVGWPVGGFPGPQGPYYCGVGADKAFGRDIVDSHYKACLYAGINVSGTNGEVMPGQWEFQVGPTVGIAAADQVWVARYILERITELAGVVLSLDPKPIPGDWNGAGAHTNYSTKSMREDGGYEVIKKAIEKLGLRHKEHIAAYGEGNERRLTGKHETADINTFLWGVANRGASIRVGRDTEQAGKGYFEDRRPASNMDPYTVTSMIAESTILWKP</sequence>
<proteinExistence type="evidence at protein level"/>
<reference key="1">
    <citation type="journal article" date="1997" name="DNA Res.">
        <title>Structural analysis of Arabidopsis thaliana chromosome 5. III. Sequence features of the regions of 1,191,918 bp covered by seventeen physically assigned P1 clones.</title>
        <authorList>
            <person name="Nakamura Y."/>
            <person name="Sato S."/>
            <person name="Kaneko T."/>
            <person name="Kotani H."/>
            <person name="Asamizu E."/>
            <person name="Miyajima N."/>
            <person name="Tabata S."/>
        </authorList>
    </citation>
    <scope>NUCLEOTIDE SEQUENCE [LARGE SCALE GENOMIC DNA]</scope>
    <source>
        <strain>cv. Columbia</strain>
    </source>
</reference>
<reference key="2">
    <citation type="journal article" date="2017" name="Plant J.">
        <title>Araport11: a complete reannotation of the Arabidopsis thaliana reference genome.</title>
        <authorList>
            <person name="Cheng C.Y."/>
            <person name="Krishnakumar V."/>
            <person name="Chan A.P."/>
            <person name="Thibaud-Nissen F."/>
            <person name="Schobel S."/>
            <person name="Town C.D."/>
        </authorList>
    </citation>
    <scope>GENOME REANNOTATION</scope>
    <source>
        <strain>cv. Columbia</strain>
    </source>
</reference>
<reference key="3">
    <citation type="journal article" date="2003" name="Science">
        <title>Empirical analysis of transcriptional activity in the Arabidopsis genome.</title>
        <authorList>
            <person name="Yamada K."/>
            <person name="Lim J."/>
            <person name="Dale J.M."/>
            <person name="Chen H."/>
            <person name="Shinn P."/>
            <person name="Palm C.J."/>
            <person name="Southwick A.M."/>
            <person name="Wu H.C."/>
            <person name="Kim C.J."/>
            <person name="Nguyen M."/>
            <person name="Pham P.K."/>
            <person name="Cheuk R.F."/>
            <person name="Karlin-Newmann G."/>
            <person name="Liu S.X."/>
            <person name="Lam B."/>
            <person name="Sakano H."/>
            <person name="Wu T."/>
            <person name="Yu G."/>
            <person name="Miranda M."/>
            <person name="Quach H.L."/>
            <person name="Tripp M."/>
            <person name="Chang C.H."/>
            <person name="Lee J.M."/>
            <person name="Toriumi M.J."/>
            <person name="Chan M.M."/>
            <person name="Tang C.C."/>
            <person name="Onodera C.S."/>
            <person name="Deng J.M."/>
            <person name="Akiyama K."/>
            <person name="Ansari Y."/>
            <person name="Arakawa T."/>
            <person name="Banh J."/>
            <person name="Banno F."/>
            <person name="Bowser L."/>
            <person name="Brooks S.Y."/>
            <person name="Carninci P."/>
            <person name="Chao Q."/>
            <person name="Choy N."/>
            <person name="Enju A."/>
            <person name="Goldsmith A.D."/>
            <person name="Gurjal M."/>
            <person name="Hansen N.F."/>
            <person name="Hayashizaki Y."/>
            <person name="Johnson-Hopson C."/>
            <person name="Hsuan V.W."/>
            <person name="Iida K."/>
            <person name="Karnes M."/>
            <person name="Khan S."/>
            <person name="Koesema E."/>
            <person name="Ishida J."/>
            <person name="Jiang P.X."/>
            <person name="Jones T."/>
            <person name="Kawai J."/>
            <person name="Kamiya A."/>
            <person name="Meyers C."/>
            <person name="Nakajima M."/>
            <person name="Narusaka M."/>
            <person name="Seki M."/>
            <person name="Sakurai T."/>
            <person name="Satou M."/>
            <person name="Tamse R."/>
            <person name="Vaysberg M."/>
            <person name="Wallender E.K."/>
            <person name="Wong C."/>
            <person name="Yamamura Y."/>
            <person name="Yuan S."/>
            <person name="Shinozaki K."/>
            <person name="Davis R.W."/>
            <person name="Theologis A."/>
            <person name="Ecker J.R."/>
        </authorList>
    </citation>
    <scope>NUCLEOTIDE SEQUENCE [LARGE SCALE MRNA]</scope>
    <source>
        <strain>cv. Columbia</strain>
    </source>
</reference>
<reference key="4">
    <citation type="journal article" date="2004" name="J. Biol. Chem.">
        <title>Kinetic properties and ammonium-dependent regulation of cytosolic isoenzymes of glutamine synthetase in Arabidopsis.</title>
        <authorList>
            <person name="Ishiyama K."/>
            <person name="Inoue E."/>
            <person name="Watanabe-Takahashi A."/>
            <person name="Obara M."/>
            <person name="Yamaya T."/>
            <person name="Takahashi H."/>
        </authorList>
    </citation>
    <scope>FUNCTION</scope>
    <scope>BIOPHYSICOCHEMICAL PROPERTIES</scope>
    <scope>CATALYTIC ACTIVITY</scope>
    <scope>TISSUE SPECIFICITY</scope>
    <scope>INDUCTION</scope>
    <scope>GENE FAMILY</scope>
</reference>
<reference key="5">
    <citation type="journal article" date="2006" name="Plant Cell Physiol.">
        <title>Gln49 and Ser174 residues play critical roles in determining the catalytic efficiencies of plant glutamine synthetase.</title>
        <authorList>
            <person name="Ishiyama K."/>
            <person name="Inoue E."/>
            <person name="Yamaya T."/>
            <person name="Takahashi H."/>
        </authorList>
    </citation>
    <scope>FUNCTION</scope>
    <scope>MUTAGENESIS OF GLN-49 AND SER-174</scope>
    <scope>BIOPHYSICOCHEMICAL PROPERTIES</scope>
    <scope>CATALYTIC ACTIVITY</scope>
</reference>
<reference key="6">
    <citation type="journal article" date="2011" name="FEBS Lett.">
        <title>14-3-3 proteins fine-tune plant nutrient metabolism.</title>
        <authorList>
            <person name="Shin R."/>
            <person name="Jez J.M."/>
            <person name="Basra A."/>
            <person name="Zhang B."/>
            <person name="Schachtman D.P."/>
        </authorList>
    </citation>
    <scope>INTERACTION WITH GRF3</scope>
</reference>
<dbReference type="EC" id="6.3.1.2" evidence="8 9"/>
<dbReference type="EMBL" id="AB008270">
    <property type="protein sequence ID" value="BAB10184.1"/>
    <property type="molecule type" value="Genomic_DNA"/>
</dbReference>
<dbReference type="EMBL" id="CP002688">
    <property type="protein sequence ID" value="AED92312.1"/>
    <property type="molecule type" value="Genomic_DNA"/>
</dbReference>
<dbReference type="EMBL" id="AY059932">
    <property type="protein sequence ID" value="AAL24414.1"/>
    <property type="molecule type" value="mRNA"/>
</dbReference>
<dbReference type="EMBL" id="AY128749">
    <property type="protein sequence ID" value="AAM91149.1"/>
    <property type="molecule type" value="mRNA"/>
</dbReference>
<dbReference type="RefSeq" id="NP_568335.1">
    <property type="nucleotide sequence ID" value="NM_121663.3"/>
</dbReference>
<dbReference type="SMR" id="Q9FMD9"/>
<dbReference type="BioGRID" id="16795">
    <property type="interactions" value="3"/>
</dbReference>
<dbReference type="FunCoup" id="Q9FMD9">
    <property type="interactions" value="1808"/>
</dbReference>
<dbReference type="STRING" id="3702.Q9FMD9"/>
<dbReference type="GlyGen" id="Q9FMD9">
    <property type="glycosylation" value="1 site"/>
</dbReference>
<dbReference type="PaxDb" id="3702-AT5G16570.1"/>
<dbReference type="ProteomicsDB" id="247394"/>
<dbReference type="EnsemblPlants" id="AT5G16570.1">
    <property type="protein sequence ID" value="AT5G16570.1"/>
    <property type="gene ID" value="AT5G16570"/>
</dbReference>
<dbReference type="GeneID" id="831519"/>
<dbReference type="Gramene" id="AT5G16570.1">
    <property type="protein sequence ID" value="AT5G16570.1"/>
    <property type="gene ID" value="AT5G16570"/>
</dbReference>
<dbReference type="KEGG" id="ath:AT5G16570"/>
<dbReference type="Araport" id="AT5G16570"/>
<dbReference type="TAIR" id="AT5G16570">
    <property type="gene designation" value="GLN1"/>
</dbReference>
<dbReference type="eggNOG" id="KOG0683">
    <property type="taxonomic scope" value="Eukaryota"/>
</dbReference>
<dbReference type="HOGENOM" id="CLU_036762_1_1_1"/>
<dbReference type="InParanoid" id="Q9FMD9"/>
<dbReference type="OMA" id="NAKYMAL"/>
<dbReference type="OrthoDB" id="1936100at2759"/>
<dbReference type="PhylomeDB" id="Q9FMD9"/>
<dbReference type="BioCyc" id="ARA:AT5G16570-MONOMER"/>
<dbReference type="BioCyc" id="MetaCyc:AT5G16570-MONOMER"/>
<dbReference type="BRENDA" id="6.3.1.2">
    <property type="organism ID" value="399"/>
</dbReference>
<dbReference type="SABIO-RK" id="Q9FMD9"/>
<dbReference type="CD-CODE" id="4299E36E">
    <property type="entry name" value="Nucleolus"/>
</dbReference>
<dbReference type="PRO" id="PR:Q9FMD9"/>
<dbReference type="Proteomes" id="UP000006548">
    <property type="component" value="Chromosome 5"/>
</dbReference>
<dbReference type="ExpressionAtlas" id="Q9FMD9">
    <property type="expression patterns" value="baseline and differential"/>
</dbReference>
<dbReference type="GO" id="GO:0005829">
    <property type="term" value="C:cytosol"/>
    <property type="evidence" value="ECO:0000303"/>
    <property type="project" value="TAIR"/>
</dbReference>
<dbReference type="GO" id="GO:0009536">
    <property type="term" value="C:plastid"/>
    <property type="evidence" value="ECO:0007005"/>
    <property type="project" value="TAIR"/>
</dbReference>
<dbReference type="GO" id="GO:0005524">
    <property type="term" value="F:ATP binding"/>
    <property type="evidence" value="ECO:0007669"/>
    <property type="project" value="UniProtKB-KW"/>
</dbReference>
<dbReference type="GO" id="GO:0004356">
    <property type="term" value="F:glutamine synthetase activity"/>
    <property type="evidence" value="ECO:0000314"/>
    <property type="project" value="TAIR"/>
</dbReference>
<dbReference type="GO" id="GO:0006542">
    <property type="term" value="P:glutamine biosynthetic process"/>
    <property type="evidence" value="ECO:0007669"/>
    <property type="project" value="InterPro"/>
</dbReference>
<dbReference type="GO" id="GO:0042128">
    <property type="term" value="P:nitrate assimilation"/>
    <property type="evidence" value="ECO:0000304"/>
    <property type="project" value="TAIR"/>
</dbReference>
<dbReference type="FunFam" id="3.30.590.10:FF:000004">
    <property type="entry name" value="Glutamine synthetase"/>
    <property type="match status" value="1"/>
</dbReference>
<dbReference type="FunFam" id="3.10.20.70:FF:000003">
    <property type="entry name" value="Glutamine synthetase, chloroplastic"/>
    <property type="match status" value="1"/>
</dbReference>
<dbReference type="Gene3D" id="3.10.20.70">
    <property type="entry name" value="Glutamine synthetase, N-terminal domain"/>
    <property type="match status" value="1"/>
</dbReference>
<dbReference type="Gene3D" id="3.30.590.10">
    <property type="entry name" value="Glutamine synthetase/guanido kinase, catalytic domain"/>
    <property type="match status" value="1"/>
</dbReference>
<dbReference type="InterPro" id="IPR008147">
    <property type="entry name" value="Gln_synt_N"/>
</dbReference>
<dbReference type="InterPro" id="IPR036651">
    <property type="entry name" value="Gln_synt_N_sf"/>
</dbReference>
<dbReference type="InterPro" id="IPR014746">
    <property type="entry name" value="Gln_synth/guanido_kin_cat_dom"/>
</dbReference>
<dbReference type="InterPro" id="IPR008146">
    <property type="entry name" value="Gln_synth_cat_dom"/>
</dbReference>
<dbReference type="InterPro" id="IPR027303">
    <property type="entry name" value="Gln_synth_gly_rich_site"/>
</dbReference>
<dbReference type="InterPro" id="IPR027302">
    <property type="entry name" value="Gln_synth_N_conserv_site"/>
</dbReference>
<dbReference type="InterPro" id="IPR050292">
    <property type="entry name" value="Glutamine_Synthetase"/>
</dbReference>
<dbReference type="PANTHER" id="PTHR20852">
    <property type="entry name" value="GLUTAMINE SYNTHETASE"/>
    <property type="match status" value="1"/>
</dbReference>
<dbReference type="PANTHER" id="PTHR20852:SF113">
    <property type="entry name" value="GLUTAMINE SYNTHETASE CYTOSOLIC ISOZYME 1-4"/>
    <property type="match status" value="1"/>
</dbReference>
<dbReference type="Pfam" id="PF00120">
    <property type="entry name" value="Gln-synt_C"/>
    <property type="match status" value="1"/>
</dbReference>
<dbReference type="SMART" id="SM01230">
    <property type="entry name" value="Gln-synt_C"/>
    <property type="match status" value="1"/>
</dbReference>
<dbReference type="SUPFAM" id="SSF54368">
    <property type="entry name" value="Glutamine synthetase, N-terminal domain"/>
    <property type="match status" value="1"/>
</dbReference>
<dbReference type="SUPFAM" id="SSF55931">
    <property type="entry name" value="Glutamine synthetase/guanido kinase"/>
    <property type="match status" value="1"/>
</dbReference>
<dbReference type="PROSITE" id="PS00180">
    <property type="entry name" value="GLNA_1"/>
    <property type="match status" value="1"/>
</dbReference>
<dbReference type="PROSITE" id="PS00181">
    <property type="entry name" value="GLNA_ATP"/>
    <property type="match status" value="1"/>
</dbReference>
<dbReference type="PROSITE" id="PS51986">
    <property type="entry name" value="GS_BETA_GRASP"/>
    <property type="match status" value="1"/>
</dbReference>
<dbReference type="PROSITE" id="PS51987">
    <property type="entry name" value="GS_CATALYTIC"/>
    <property type="match status" value="1"/>
</dbReference>
<comment type="function">
    <text evidence="8 9">High-affinity glutamine synthetase (PubMed:14757761, PubMed:16338958). May contribute to the homeostatic control of glutamine synthesis in roots (PubMed:14757761).</text>
</comment>
<comment type="catalytic activity">
    <reaction evidence="8 9">
        <text>L-glutamate + NH4(+) + ATP = L-glutamine + ADP + phosphate + H(+)</text>
        <dbReference type="Rhea" id="RHEA:16169"/>
        <dbReference type="ChEBI" id="CHEBI:15378"/>
        <dbReference type="ChEBI" id="CHEBI:28938"/>
        <dbReference type="ChEBI" id="CHEBI:29985"/>
        <dbReference type="ChEBI" id="CHEBI:30616"/>
        <dbReference type="ChEBI" id="CHEBI:43474"/>
        <dbReference type="ChEBI" id="CHEBI:58359"/>
        <dbReference type="ChEBI" id="CHEBI:456216"/>
        <dbReference type="EC" id="6.3.1.2"/>
    </reaction>
</comment>
<comment type="biophysicochemical properties">
    <kinetics>
        <KM evidence="8">0.6 mM for glutamate</KM>
        <KM evidence="8">48 uM for ammonium</KM>
        <KM evidence="9">120 uM for ammonium</KM>
        <KM evidence="9">0.67 mM for glutamate</KM>
        <KM evidence="8">400 uM for ATP</KM>
        <Vmax evidence="8">79.2 nmol/sec/mg enzyme with glutamate as substrate</Vmax>
        <Vmax evidence="8">65.7 nmol/sec/mg enzyme with ammonium as substrate</Vmax>
        <Vmax evidence="8">73.9 nmol/sec/mg enzyme with ATP as substrate</Vmax>
        <text evidence="8 9">Measured at pH 7.8 and 30 degrees Celsius for all experiments (PubMed:14757761). kcat is 2.96 sec(-1) with ammonium as substrate (PubMed:16338958). kcat is 4.18 sec(-1) with glutamate as substrate (PubMed:16338958).</text>
    </kinetics>
</comment>
<comment type="subunit">
    <text evidence="1 10">Homooctamer (By similarity). Interacts with GRF3.</text>
</comment>
<comment type="subcellular location">
    <subcellularLocation>
        <location>Cytoplasm</location>
    </subcellularLocation>
</comment>
<comment type="tissue specificity">
    <text evidence="8">Expressed in the pericycle in the region of lateral root emergence.</text>
</comment>
<comment type="induction">
    <text evidence="8">Down-regulated by ammonium supply.</text>
</comment>
<comment type="similarity">
    <text evidence="12">Belongs to the glutamine synthetase family.</text>
</comment>
<gene>
    <name evidence="11" type="primary">GLN1-4</name>
    <name evidence="13" type="ordered locus">At5g16570</name>
    <name evidence="14" type="ORF">MTG13.1</name>
</gene>
<evidence type="ECO:0000250" key="1">
    <source>
        <dbReference type="UniProtKB" id="P16580"/>
    </source>
</evidence>
<evidence type="ECO:0000250" key="2">
    <source>
        <dbReference type="UniProtKB" id="Q43127"/>
    </source>
</evidence>
<evidence type="ECO:0000250" key="3">
    <source>
        <dbReference type="UniProtKB" id="Q56WN1"/>
    </source>
</evidence>
<evidence type="ECO:0000250" key="4">
    <source>
        <dbReference type="UniProtKB" id="Q8LCE1"/>
    </source>
</evidence>
<evidence type="ECO:0000255" key="5">
    <source>
        <dbReference type="PROSITE-ProRule" id="PRU01330"/>
    </source>
</evidence>
<evidence type="ECO:0000255" key="6">
    <source>
        <dbReference type="PROSITE-ProRule" id="PRU01331"/>
    </source>
</evidence>
<evidence type="ECO:0000256" key="7">
    <source>
        <dbReference type="SAM" id="MobiDB-lite"/>
    </source>
</evidence>
<evidence type="ECO:0000269" key="8">
    <source>
    </source>
</evidence>
<evidence type="ECO:0000269" key="9">
    <source>
    </source>
</evidence>
<evidence type="ECO:0000269" key="10">
    <source>
    </source>
</evidence>
<evidence type="ECO:0000303" key="11">
    <source>
    </source>
</evidence>
<evidence type="ECO:0000305" key="12"/>
<evidence type="ECO:0000312" key="13">
    <source>
        <dbReference type="Araport" id="AT5G16570"/>
    </source>
</evidence>
<evidence type="ECO:0000312" key="14">
    <source>
        <dbReference type="EMBL" id="BAB10184.1"/>
    </source>
</evidence>
<feature type="initiator methionine" description="Removed" evidence="3">
    <location>
        <position position="1"/>
    </location>
</feature>
<feature type="chain" id="PRO_0000239820" description="Glutamine synthetase cytosolic isozyme 1-4">
    <location>
        <begin position="2"/>
        <end position="356"/>
    </location>
</feature>
<feature type="domain" description="GS beta-grasp" evidence="5">
    <location>
        <begin position="19"/>
        <end position="99"/>
    </location>
</feature>
<feature type="domain" description="GS catalytic" evidence="6">
    <location>
        <begin position="106"/>
        <end position="356"/>
    </location>
</feature>
<feature type="region of interest" description="Disordered" evidence="7">
    <location>
        <begin position="37"/>
        <end position="66"/>
    </location>
</feature>
<feature type="modified residue" description="N-acetylserine" evidence="3">
    <location>
        <position position="2"/>
    </location>
</feature>
<feature type="modified residue" description="Phosphoserine" evidence="4">
    <location>
        <position position="2"/>
    </location>
</feature>
<feature type="modified residue" description="Phosphoserine" evidence="2">
    <location>
        <position position="48"/>
    </location>
</feature>
<feature type="mutagenesis site" description="6-fold decrease in affinity for ammonium and catalytic efficiency; when associated with A-174." evidence="9">
    <original>Q</original>
    <variation>K</variation>
    <location>
        <position position="49"/>
    </location>
</feature>
<feature type="mutagenesis site" description="6-fold decrease in affinity for ammonium and catalytic efficiency; when associated with K-49." evidence="9">
    <original>S</original>
    <variation>A</variation>
    <location>
        <position position="174"/>
    </location>
</feature>
<accession>Q9FMD9</accession>
<protein>
    <recommendedName>
        <fullName evidence="11">Glutamine synthetase cytosolic isozyme 1-4</fullName>
        <ecNumber evidence="8 9">6.3.1.2</ecNumber>
    </recommendedName>
    <alternativeName>
        <fullName evidence="11">Glutamate--ammonia ligase GLN1;4</fullName>
        <shortName evidence="11">GLN1;4</shortName>
    </alternativeName>
</protein>
<name>GLN14_ARATH</name>